<reference key="1">
    <citation type="submission" date="2007-03" db="EMBL/GenBank/DDBJ databases">
        <title>Complete sequence of Shewanella loihica PV-4.</title>
        <authorList>
            <consortium name="US DOE Joint Genome Institute"/>
            <person name="Copeland A."/>
            <person name="Lucas S."/>
            <person name="Lapidus A."/>
            <person name="Barry K."/>
            <person name="Detter J.C."/>
            <person name="Glavina del Rio T."/>
            <person name="Hammon N."/>
            <person name="Israni S."/>
            <person name="Dalin E."/>
            <person name="Tice H."/>
            <person name="Pitluck S."/>
            <person name="Chain P."/>
            <person name="Malfatti S."/>
            <person name="Shin M."/>
            <person name="Vergez L."/>
            <person name="Schmutz J."/>
            <person name="Larimer F."/>
            <person name="Land M."/>
            <person name="Hauser L."/>
            <person name="Kyrpides N."/>
            <person name="Mikhailova N."/>
            <person name="Romine M.F."/>
            <person name="Serres G."/>
            <person name="Fredrickson J."/>
            <person name="Tiedje J."/>
            <person name="Richardson P."/>
        </authorList>
    </citation>
    <scope>NUCLEOTIDE SEQUENCE [LARGE SCALE GENOMIC DNA]</scope>
    <source>
        <strain>ATCC BAA-1088 / PV-4</strain>
    </source>
</reference>
<proteinExistence type="inferred from homology"/>
<organism>
    <name type="scientific">Shewanella loihica (strain ATCC BAA-1088 / PV-4)</name>
    <dbReference type="NCBI Taxonomy" id="323850"/>
    <lineage>
        <taxon>Bacteria</taxon>
        <taxon>Pseudomonadati</taxon>
        <taxon>Pseudomonadota</taxon>
        <taxon>Gammaproteobacteria</taxon>
        <taxon>Alteromonadales</taxon>
        <taxon>Shewanellaceae</taxon>
        <taxon>Shewanella</taxon>
    </lineage>
</organism>
<sequence length="129" mass="13991">MSNIPTELKYASSHEWIRREEDGSYTVGISEHAQELLGDMVFVELPEVGDSVSAGDDCAVAESVKAASDIYAPVSGEVVAVNEALEDSPELVNSDAYGDGWFFRIMPSDLSELDNLLDAEGYQAVIDEE</sequence>
<gene>
    <name evidence="1" type="primary">gcvH</name>
    <name type="ordered locus">Shew_3063</name>
</gene>
<accession>A3QHI1</accession>
<feature type="chain" id="PRO_0000302432" description="Glycine cleavage system H protein">
    <location>
        <begin position="1"/>
        <end position="129"/>
    </location>
</feature>
<feature type="domain" description="Lipoyl-binding" evidence="2">
    <location>
        <begin position="24"/>
        <end position="106"/>
    </location>
</feature>
<feature type="modified residue" description="N6-lipoyllysine" evidence="1">
    <location>
        <position position="65"/>
    </location>
</feature>
<comment type="function">
    <text evidence="1">The glycine cleavage system catalyzes the degradation of glycine. The H protein shuttles the methylamine group of glycine from the P protein to the T protein.</text>
</comment>
<comment type="cofactor">
    <cofactor evidence="1">
        <name>(R)-lipoate</name>
        <dbReference type="ChEBI" id="CHEBI:83088"/>
    </cofactor>
    <text evidence="1">Binds 1 lipoyl cofactor covalently.</text>
</comment>
<comment type="subunit">
    <text evidence="1">The glycine cleavage system is composed of four proteins: P, T, L and H.</text>
</comment>
<comment type="similarity">
    <text evidence="1">Belongs to the GcvH family.</text>
</comment>
<dbReference type="EMBL" id="CP000606">
    <property type="protein sequence ID" value="ABO24929.1"/>
    <property type="molecule type" value="Genomic_DNA"/>
</dbReference>
<dbReference type="RefSeq" id="WP_011866859.1">
    <property type="nucleotide sequence ID" value="NC_009092.1"/>
</dbReference>
<dbReference type="SMR" id="A3QHI1"/>
<dbReference type="STRING" id="323850.Shew_3063"/>
<dbReference type="KEGG" id="slo:Shew_3063"/>
<dbReference type="eggNOG" id="COG0509">
    <property type="taxonomic scope" value="Bacteria"/>
</dbReference>
<dbReference type="HOGENOM" id="CLU_097408_2_1_6"/>
<dbReference type="OrthoDB" id="9796712at2"/>
<dbReference type="Proteomes" id="UP000001558">
    <property type="component" value="Chromosome"/>
</dbReference>
<dbReference type="GO" id="GO:0005829">
    <property type="term" value="C:cytosol"/>
    <property type="evidence" value="ECO:0007669"/>
    <property type="project" value="TreeGrafter"/>
</dbReference>
<dbReference type="GO" id="GO:0005960">
    <property type="term" value="C:glycine cleavage complex"/>
    <property type="evidence" value="ECO:0007669"/>
    <property type="project" value="InterPro"/>
</dbReference>
<dbReference type="GO" id="GO:0019464">
    <property type="term" value="P:glycine decarboxylation via glycine cleavage system"/>
    <property type="evidence" value="ECO:0007669"/>
    <property type="project" value="UniProtKB-UniRule"/>
</dbReference>
<dbReference type="CDD" id="cd06848">
    <property type="entry name" value="GCS_H"/>
    <property type="match status" value="1"/>
</dbReference>
<dbReference type="FunFam" id="2.40.50.100:FF:000011">
    <property type="entry name" value="Glycine cleavage system H protein"/>
    <property type="match status" value="1"/>
</dbReference>
<dbReference type="Gene3D" id="2.40.50.100">
    <property type="match status" value="1"/>
</dbReference>
<dbReference type="HAMAP" id="MF_00272">
    <property type="entry name" value="GcvH"/>
    <property type="match status" value="1"/>
</dbReference>
<dbReference type="InterPro" id="IPR003016">
    <property type="entry name" value="2-oxoA_DH_lipoyl-BS"/>
</dbReference>
<dbReference type="InterPro" id="IPR000089">
    <property type="entry name" value="Biotin_lipoyl"/>
</dbReference>
<dbReference type="InterPro" id="IPR002930">
    <property type="entry name" value="GCV_H"/>
</dbReference>
<dbReference type="InterPro" id="IPR033753">
    <property type="entry name" value="GCV_H/Fam206"/>
</dbReference>
<dbReference type="InterPro" id="IPR017453">
    <property type="entry name" value="GCV_H_sub"/>
</dbReference>
<dbReference type="InterPro" id="IPR011053">
    <property type="entry name" value="Single_hybrid_motif"/>
</dbReference>
<dbReference type="NCBIfam" id="TIGR00527">
    <property type="entry name" value="gcvH"/>
    <property type="match status" value="1"/>
</dbReference>
<dbReference type="NCBIfam" id="NF002270">
    <property type="entry name" value="PRK01202.1"/>
    <property type="match status" value="1"/>
</dbReference>
<dbReference type="PANTHER" id="PTHR11715">
    <property type="entry name" value="GLYCINE CLEAVAGE SYSTEM H PROTEIN"/>
    <property type="match status" value="1"/>
</dbReference>
<dbReference type="PANTHER" id="PTHR11715:SF3">
    <property type="entry name" value="GLYCINE CLEAVAGE SYSTEM H PROTEIN-RELATED"/>
    <property type="match status" value="1"/>
</dbReference>
<dbReference type="Pfam" id="PF01597">
    <property type="entry name" value="GCV_H"/>
    <property type="match status" value="1"/>
</dbReference>
<dbReference type="SUPFAM" id="SSF51230">
    <property type="entry name" value="Single hybrid motif"/>
    <property type="match status" value="1"/>
</dbReference>
<dbReference type="PROSITE" id="PS50968">
    <property type="entry name" value="BIOTINYL_LIPOYL"/>
    <property type="match status" value="1"/>
</dbReference>
<dbReference type="PROSITE" id="PS00189">
    <property type="entry name" value="LIPOYL"/>
    <property type="match status" value="1"/>
</dbReference>
<protein>
    <recommendedName>
        <fullName evidence="1">Glycine cleavage system H protein</fullName>
    </recommendedName>
</protein>
<name>GCSH_SHELP</name>
<keyword id="KW-0450">Lipoyl</keyword>
<keyword id="KW-1185">Reference proteome</keyword>
<evidence type="ECO:0000255" key="1">
    <source>
        <dbReference type="HAMAP-Rule" id="MF_00272"/>
    </source>
</evidence>
<evidence type="ECO:0000255" key="2">
    <source>
        <dbReference type="PROSITE-ProRule" id="PRU01066"/>
    </source>
</evidence>